<name>GILT_PIG</name>
<organism>
    <name type="scientific">Sus scrofa</name>
    <name type="common">Pig</name>
    <dbReference type="NCBI Taxonomy" id="9823"/>
    <lineage>
        <taxon>Eukaryota</taxon>
        <taxon>Metazoa</taxon>
        <taxon>Chordata</taxon>
        <taxon>Craniata</taxon>
        <taxon>Vertebrata</taxon>
        <taxon>Euteleostomi</taxon>
        <taxon>Mammalia</taxon>
        <taxon>Eutheria</taxon>
        <taxon>Laurasiatheria</taxon>
        <taxon>Artiodactyla</taxon>
        <taxon>Suina</taxon>
        <taxon>Suidae</taxon>
        <taxon>Sus</taxon>
    </lineage>
</organism>
<gene>
    <name type="primary">IFI30</name>
    <name type="synonym">GILT</name>
</gene>
<sequence length="246" mass="27614">MASSPLLPFLPLLLLLLLEVPAAAPASPLQSLLQGAAPCKAGEPCLQRPVGKSDPPPVNVNLYYESLCNGCRYFLVRELFPTWLMVWEILNVTLVPYGNAQERNVSGRWEFTCQHGEQECKMNKVEACLLDKLEKNMAFLTIVCIEELDDMEKNLEPCLQIYAPKVSPDSIMECAMGDRGMQLLHINAQLTDALKPPHEYVPWVVVNGKPMTEKDQLLRLVCQLYEGEKPDVCQILASSHKEVCFK</sequence>
<reference key="1">
    <citation type="journal article" date="2008" name="Vet. Immunol. Immunopathol.">
        <title>Molecular cloning and expression analysis of porcine gamma-interferon-inducible lysosomal thiol reductase (GILT).</title>
        <authorList>
            <person name="Dan W.B."/>
            <person name="Wang S.L."/>
            <person name="Liang J.Q."/>
            <person name="Zhang S.Q."/>
        </authorList>
    </citation>
    <scope>NUCLEOTIDE SEQUENCE [GENOMIC DNA / MRNA]</scope>
    <scope>INDUCTION</scope>
    <scope>TISSUE SPECIFICITY</scope>
</reference>
<evidence type="ECO:0000250" key="1"/>
<evidence type="ECO:0000250" key="2">
    <source>
        <dbReference type="UniProtKB" id="P13284"/>
    </source>
</evidence>
<evidence type="ECO:0000255" key="3"/>
<evidence type="ECO:0000269" key="4">
    <source>
    </source>
</evidence>
<evidence type="ECO:0000305" key="5"/>
<accession>B3SP85</accession>
<keyword id="KW-1015">Disulfide bond</keyword>
<keyword id="KW-0325">Glycoprotein</keyword>
<keyword id="KW-0391">Immunity</keyword>
<keyword id="KW-0458">Lysosome</keyword>
<keyword id="KW-0560">Oxidoreductase</keyword>
<keyword id="KW-0676">Redox-active center</keyword>
<keyword id="KW-1185">Reference proteome</keyword>
<keyword id="KW-0964">Secreted</keyword>
<keyword id="KW-0732">Signal</keyword>
<comment type="function">
    <text evidence="1">Lysosomal thiol reductase that can reduce protein disulfide bonds. May facilitate the complete unfolding of proteins destined for lysosomal degradation. Plays an important role in antigen processing. Facilitates the generation of MHC class II-restricted epitodes from disulfide bond-containing antigen by the endocytic reduction of disulfide bonds. Also facilitates MHC class I-restricted recognition of exogenous antigens containing disulfide bonds by CD8+ T-cells or crosspresentation (By similarity).</text>
</comment>
<comment type="subunit">
    <text evidence="1">Dimer; disulfide-linked.</text>
</comment>
<comment type="subcellular location">
    <subcellularLocation>
        <location evidence="1">Secreted</location>
    </subcellularLocation>
    <subcellularLocation>
        <location evidence="1">Lysosome</location>
    </subcellularLocation>
</comment>
<comment type="tissue specificity">
    <text evidence="4">Expressed in many tissues, including spleen, liver, lung, heart, intestine, blood and kidney.</text>
</comment>
<comment type="induction">
    <text evidence="4">By LPS in spleen and blood.</text>
</comment>
<comment type="PTM">
    <text evidence="1">N-glycosylated. Sugar chains contain mannose-6-phosphate (By similarity).</text>
</comment>
<comment type="PTM">
    <text evidence="1">Synthesized as a 35 kDa precursor which is then processed into the mature 30 kDa form via cleavage of N-terminal and C-terminal propeptides. Processing of the precursor is mediated by multiple lysosomal proteases (By similarity).</text>
</comment>
<comment type="miscellaneous">
    <text evidence="1">Both precursor form and mature form have thiol reductase activity.</text>
</comment>
<comment type="similarity">
    <text evidence="5">Belongs to the GILT family.</text>
</comment>
<feature type="signal peptide" evidence="3">
    <location>
        <begin position="1"/>
        <end position="26"/>
    </location>
</feature>
<feature type="propeptide" id="PRO_0000406224" description="Removed in mature form" evidence="2">
    <location>
        <begin position="27"/>
        <end position="53"/>
    </location>
</feature>
<feature type="chain" id="PRO_0000406225" description="Gamma-interferon-inducible-lysosomal thiol reductase">
    <location>
        <begin position="54"/>
        <end position="228"/>
    </location>
</feature>
<feature type="propeptide" id="PRO_0000406226" description="Removed in mature form" evidence="2">
    <location>
        <begin position="229"/>
        <end position="246"/>
    </location>
</feature>
<feature type="glycosylation site" description="N-linked (GlcNAc...) asparagine" evidence="3">
    <location>
        <position position="91"/>
    </location>
</feature>
<feature type="glycosylation site" description="N-linked (GlcNAc...) asparagine" evidence="3">
    <location>
        <position position="104"/>
    </location>
</feature>
<feature type="disulfide bond" description="Redox-active" evidence="2">
    <location>
        <begin position="68"/>
        <end position="71"/>
    </location>
</feature>
<dbReference type="EC" id="1.8.-.-" evidence="2"/>
<dbReference type="EMBL" id="EF644197">
    <property type="protein sequence ID" value="ABV21385.1"/>
    <property type="molecule type" value="mRNA"/>
</dbReference>
<dbReference type="EMBL" id="EU154970">
    <property type="protein sequence ID" value="ABX79390.1"/>
    <property type="molecule type" value="Genomic_DNA"/>
</dbReference>
<dbReference type="RefSeq" id="NP_001124518.1">
    <property type="nucleotide sequence ID" value="NM_001131046.1"/>
</dbReference>
<dbReference type="SMR" id="B3SP85"/>
<dbReference type="FunCoup" id="B3SP85">
    <property type="interactions" value="321"/>
</dbReference>
<dbReference type="STRING" id="9823.ENSSSCP00000071226"/>
<dbReference type="GlyCosmos" id="B3SP85">
    <property type="glycosylation" value="2 sites, No reported glycans"/>
</dbReference>
<dbReference type="GlyGen" id="B3SP85">
    <property type="glycosylation" value="2 sites"/>
</dbReference>
<dbReference type="PaxDb" id="9823-ENSSSCP00000014781"/>
<dbReference type="PeptideAtlas" id="B3SP85"/>
<dbReference type="Ensembl" id="ENSSSCT00000015187.4">
    <property type="protein sequence ID" value="ENSSSCP00000014781.3"/>
    <property type="gene ID" value="ENSSSCG00000013901.4"/>
</dbReference>
<dbReference type="Ensembl" id="ENSSSCT00115019026">
    <property type="protein sequence ID" value="ENSSSCP00115017997"/>
    <property type="gene ID" value="ENSSSCG00115011015"/>
</dbReference>
<dbReference type="GeneID" id="100174943"/>
<dbReference type="KEGG" id="ssc:100174943"/>
<dbReference type="CTD" id="10437"/>
<dbReference type="VGNC" id="VGNC:89031">
    <property type="gene designation" value="IFI30"/>
</dbReference>
<dbReference type="eggNOG" id="KOG3160">
    <property type="taxonomic scope" value="Eukaryota"/>
</dbReference>
<dbReference type="GeneTree" id="ENSGT00390000010450"/>
<dbReference type="HOGENOM" id="CLU_066886_0_0_1"/>
<dbReference type="InParanoid" id="B3SP85"/>
<dbReference type="OMA" id="SHKEVCF"/>
<dbReference type="OrthoDB" id="958254at2759"/>
<dbReference type="TreeFam" id="TF315141"/>
<dbReference type="Reactome" id="R-SSC-2132295">
    <property type="pathway name" value="MHC class II antigen presentation"/>
</dbReference>
<dbReference type="Proteomes" id="UP000008227">
    <property type="component" value="Chromosome 2"/>
</dbReference>
<dbReference type="Proteomes" id="UP000314985">
    <property type="component" value="Unplaced"/>
</dbReference>
<dbReference type="Proteomes" id="UP000694570">
    <property type="component" value="Unplaced"/>
</dbReference>
<dbReference type="Proteomes" id="UP000694571">
    <property type="component" value="Unplaced"/>
</dbReference>
<dbReference type="Proteomes" id="UP000694720">
    <property type="component" value="Unplaced"/>
</dbReference>
<dbReference type="Proteomes" id="UP000694722">
    <property type="component" value="Unplaced"/>
</dbReference>
<dbReference type="Proteomes" id="UP000694723">
    <property type="component" value="Unplaced"/>
</dbReference>
<dbReference type="Proteomes" id="UP000694724">
    <property type="component" value="Unplaced"/>
</dbReference>
<dbReference type="Proteomes" id="UP000694725">
    <property type="component" value="Unplaced"/>
</dbReference>
<dbReference type="Proteomes" id="UP000694726">
    <property type="component" value="Unplaced"/>
</dbReference>
<dbReference type="Proteomes" id="UP000694727">
    <property type="component" value="Unplaced"/>
</dbReference>
<dbReference type="Proteomes" id="UP000694728">
    <property type="component" value="Unplaced"/>
</dbReference>
<dbReference type="GO" id="GO:0030054">
    <property type="term" value="C:cell junction"/>
    <property type="evidence" value="ECO:0007669"/>
    <property type="project" value="Ensembl"/>
</dbReference>
<dbReference type="GO" id="GO:0005829">
    <property type="term" value="C:cytosol"/>
    <property type="evidence" value="ECO:0007669"/>
    <property type="project" value="Ensembl"/>
</dbReference>
<dbReference type="GO" id="GO:0005576">
    <property type="term" value="C:extracellular region"/>
    <property type="evidence" value="ECO:0007669"/>
    <property type="project" value="UniProtKB-SubCell"/>
</dbReference>
<dbReference type="GO" id="GO:0005764">
    <property type="term" value="C:lysosome"/>
    <property type="evidence" value="ECO:0000250"/>
    <property type="project" value="UniProtKB"/>
</dbReference>
<dbReference type="GO" id="GO:0016667">
    <property type="term" value="F:oxidoreductase activity, acting on a sulfur group of donors"/>
    <property type="evidence" value="ECO:0000250"/>
    <property type="project" value="UniProtKB"/>
</dbReference>
<dbReference type="GO" id="GO:0016671">
    <property type="term" value="F:oxidoreductase activity, acting on a sulfur group of donors, disulfide as acceptor"/>
    <property type="evidence" value="ECO:0007669"/>
    <property type="project" value="InterPro"/>
</dbReference>
<dbReference type="GO" id="GO:0042590">
    <property type="term" value="P:antigen processing and presentation of exogenous peptide antigen via MHC class I"/>
    <property type="evidence" value="ECO:0000250"/>
    <property type="project" value="UniProtKB"/>
</dbReference>
<dbReference type="GO" id="GO:0019886">
    <property type="term" value="P:antigen processing and presentation of exogenous peptide antigen via MHC class II"/>
    <property type="evidence" value="ECO:0007669"/>
    <property type="project" value="Ensembl"/>
</dbReference>
<dbReference type="GO" id="GO:0048147">
    <property type="term" value="P:negative regulation of fibroblast proliferation"/>
    <property type="evidence" value="ECO:0007669"/>
    <property type="project" value="Ensembl"/>
</dbReference>
<dbReference type="GO" id="GO:0050821">
    <property type="term" value="P:protein stabilization"/>
    <property type="evidence" value="ECO:0007669"/>
    <property type="project" value="Ensembl"/>
</dbReference>
<dbReference type="InterPro" id="IPR004911">
    <property type="entry name" value="Interferon-induced_GILT"/>
</dbReference>
<dbReference type="PANTHER" id="PTHR13234">
    <property type="entry name" value="GAMMA-INTERFERON INDUCIBLE LYSOSOMAL THIOL REDUCTASE GILT"/>
    <property type="match status" value="1"/>
</dbReference>
<dbReference type="PANTHER" id="PTHR13234:SF8">
    <property type="entry name" value="GAMMA-INTERFERON-INDUCIBLE LYSOSOMAL THIOL REDUCTASE"/>
    <property type="match status" value="1"/>
</dbReference>
<dbReference type="Pfam" id="PF03227">
    <property type="entry name" value="GILT"/>
    <property type="match status" value="1"/>
</dbReference>
<protein>
    <recommendedName>
        <fullName>Gamma-interferon-inducible-lysosomal thiol reductase</fullName>
        <ecNumber evidence="2">1.8.-.-</ecNumber>
    </recommendedName>
</protein>
<proteinExistence type="evidence at transcript level"/>